<feature type="chain" id="PRO_0000454285" description="Propanediol utilization protein PduV">
    <location>
        <begin position="1"/>
        <end position="150"/>
    </location>
</feature>
<feature type="region of interest" description="Targets protein to the BMC" evidence="4">
    <location>
        <begin position="1"/>
        <end position="42"/>
    </location>
</feature>
<feature type="binding site" evidence="6">
    <location>
        <begin position="8"/>
        <end position="15"/>
    </location>
    <ligand>
        <name>GTP</name>
        <dbReference type="ChEBI" id="CHEBI:37565"/>
    </ligand>
</feature>
<sequence>MKRIMLIGPSQCGKTSLTQCMRGEALHYQKTQAIVWSPTTIDTPGEYLENRCLYSALLASACEADIIALVLNADAPWSPFSPGFTGPMNRPVIGLVTKADLASPQRISLVESWLVQAGAQKVFFTSALENTGVDEMFIFLNAKESSCLTK</sequence>
<name>PDUV_CITFR</name>
<protein>
    <recommendedName>
        <fullName>Propanediol utilization protein PduV</fullName>
    </recommendedName>
</protein>
<evidence type="ECO:0000250" key="1">
    <source>
        <dbReference type="UniProtKB" id="Q9XDM6"/>
    </source>
</evidence>
<evidence type="ECO:0000255" key="2">
    <source>
        <dbReference type="PIRNR" id="PIRNR036409"/>
    </source>
</evidence>
<evidence type="ECO:0000269" key="3">
    <source>
    </source>
</evidence>
<evidence type="ECO:0000269" key="4">
    <source>
    </source>
</evidence>
<evidence type="ECO:0000303" key="5">
    <source>
    </source>
</evidence>
<evidence type="ECO:0000305" key="6">
    <source>
    </source>
</evidence>
<gene>
    <name evidence="5" type="primary">pduV</name>
</gene>
<proteinExistence type="evidence at protein level"/>
<reference key="1">
    <citation type="journal article" date="2008" name="J. Biol. Chem.">
        <title>Biochemical and Structural Insights into Bacterial Organelle Form and Biogenesis.</title>
        <authorList>
            <person name="Parsons J.B."/>
            <person name="Dinesh S.D."/>
            <person name="Deery E."/>
            <person name="Leech H.K."/>
            <person name="Brindley A.A."/>
            <person name="Heldt D."/>
            <person name="Frank S."/>
            <person name="Smales C.M."/>
            <person name="Lunsdorf H."/>
            <person name="Rambach A."/>
            <person name="Gass M.H."/>
            <person name="Bleloch A."/>
            <person name="McClean K.J."/>
            <person name="Munro A.W."/>
            <person name="Rigby S.E.J."/>
            <person name="Warren M.J."/>
            <person name="Prentice M.B."/>
        </authorList>
    </citation>
    <scope>NUCLEOTIDE SEQUENCE [GENOMIC DNA]</scope>
    <scope>FUNCTION</scope>
    <scope>PATHWAY</scope>
</reference>
<reference key="2">
    <citation type="journal article" date="2010" name="Mol. Cell">
        <title>Synthesis of empty bacterial microcompartments, directed organelle protein incorporation, and evidence of filament-associated organelle movement.</title>
        <authorList>
            <person name="Parsons J.B."/>
            <person name="Frank S."/>
            <person name="Bhella D."/>
            <person name="Liang M."/>
            <person name="Prentice M.B."/>
            <person name="Mulvihill D.P."/>
            <person name="Warren M.J."/>
        </authorList>
    </citation>
    <scope>FUNCTION</scope>
    <scope>SUBCELLULAR LOCATION</scope>
    <scope>DOMAIN</scope>
    <scope>BIOTECHNOLOGY</scope>
</reference>
<keyword id="KW-1283">Bacterial microcompartment</keyword>
<keyword id="KW-0342">GTP-binding</keyword>
<keyword id="KW-0547">Nucleotide-binding</keyword>
<comment type="function">
    <text evidence="4 6">May play a role in the spatial distribution of the bacterial microcompartment (BMC) dedicated to 1,2-PD degradation, perhaps being involved in cytoskeleton dynamics; might bind GTP (Probable). This subunit is directly targeted to the BMC (PubMed:20417607).</text>
</comment>
<comment type="function">
    <text evidence="3">Expression of a cosmid containing the full 21-gene pdu operon in E.coli allows E.coli to grow on 1,2-propanediol (1,2-PD) with the appearance of bacterial microcompartments (BMC) in its cytoplasm.</text>
</comment>
<comment type="function">
    <text evidence="6">The 1,2-PD-specific bacterial microcompartment (BMC) concentrates low levels of 1,2-PD catabolic enzymes, concentrates volatile reaction intermediates thus enhancing pathway flux and keeps the level of toxic, mutagenic propionaldehyde low.</text>
</comment>
<comment type="pathway">
    <text evidence="3">Polyol metabolism; 1,2-propanediol degradation.</text>
</comment>
<comment type="subunit">
    <text evidence="1">Interacts with PduU, probably via the PduU beta-barrel which is predicted by modeling to be on the exterior of the BMC.</text>
</comment>
<comment type="subcellular location">
    <subcellularLocation>
        <location evidence="4">Bacterial microcompartment</location>
    </subcellularLocation>
    <text evidence="6">Probably found on the exterior of the BMC.</text>
</comment>
<comment type="domain">
    <text evidence="4">The N-terminus is required for targeting to the BMC; 42 residues target GFP to the BMC, although 98 residues give better targeting.</text>
</comment>
<comment type="biotechnology">
    <text evidence="4">Can be used to target proteins to the BMC (tested with GFP).</text>
</comment>
<comment type="similarity">
    <text evidence="2">Belongs to the EutP/PduV family.</text>
</comment>
<dbReference type="EMBL" id="AM498294">
    <property type="protein sequence ID" value="CAM57301.1"/>
    <property type="molecule type" value="Genomic_DNA"/>
</dbReference>
<dbReference type="SMR" id="B1VB80"/>
<dbReference type="UniPathway" id="UPA00621"/>
<dbReference type="GO" id="GO:0031469">
    <property type="term" value="C:bacterial microcompartment"/>
    <property type="evidence" value="ECO:0007669"/>
    <property type="project" value="UniProtKB-SubCell"/>
</dbReference>
<dbReference type="GO" id="GO:0005524">
    <property type="term" value="F:ATP binding"/>
    <property type="evidence" value="ECO:0007669"/>
    <property type="project" value="InterPro"/>
</dbReference>
<dbReference type="GO" id="GO:0005525">
    <property type="term" value="F:GTP binding"/>
    <property type="evidence" value="ECO:0007669"/>
    <property type="project" value="UniProtKB-KW"/>
</dbReference>
<dbReference type="GO" id="GO:0006576">
    <property type="term" value="P:biogenic amine metabolic process"/>
    <property type="evidence" value="ECO:0007669"/>
    <property type="project" value="InterPro"/>
</dbReference>
<dbReference type="GO" id="GO:0051144">
    <property type="term" value="P:propanediol catabolic process"/>
    <property type="evidence" value="ECO:0007669"/>
    <property type="project" value="UniProtKB-UniPathway"/>
</dbReference>
<dbReference type="CDD" id="cd00882">
    <property type="entry name" value="Ras_like_GTPase"/>
    <property type="match status" value="1"/>
</dbReference>
<dbReference type="Gene3D" id="3.40.50.300">
    <property type="entry name" value="P-loop containing nucleotide triphosphate hydrolases"/>
    <property type="match status" value="1"/>
</dbReference>
<dbReference type="InterPro" id="IPR012381">
    <property type="entry name" value="EutP_PduV"/>
</dbReference>
<dbReference type="InterPro" id="IPR027417">
    <property type="entry name" value="P-loop_NTPase"/>
</dbReference>
<dbReference type="NCBIfam" id="TIGR02528">
    <property type="entry name" value="EutP"/>
    <property type="match status" value="1"/>
</dbReference>
<dbReference type="PANTHER" id="PTHR40453">
    <property type="entry name" value="PROTEIN YOEF"/>
    <property type="match status" value="1"/>
</dbReference>
<dbReference type="PANTHER" id="PTHR40453:SF1">
    <property type="entry name" value="PROTEIN YOEF"/>
    <property type="match status" value="1"/>
</dbReference>
<dbReference type="Pfam" id="PF10662">
    <property type="entry name" value="PduV-EutP"/>
    <property type="match status" value="1"/>
</dbReference>
<dbReference type="PIRSF" id="PIRSF036409">
    <property type="entry name" value="EutP_PduV"/>
    <property type="match status" value="1"/>
</dbReference>
<dbReference type="SUPFAM" id="SSF52540">
    <property type="entry name" value="P-loop containing nucleoside triphosphate hydrolases"/>
    <property type="match status" value="1"/>
</dbReference>
<accession>B1VB80</accession>
<organism>
    <name type="scientific">Citrobacter freundii</name>
    <dbReference type="NCBI Taxonomy" id="546"/>
    <lineage>
        <taxon>Bacteria</taxon>
        <taxon>Pseudomonadati</taxon>
        <taxon>Pseudomonadota</taxon>
        <taxon>Gammaproteobacteria</taxon>
        <taxon>Enterobacterales</taxon>
        <taxon>Enterobacteriaceae</taxon>
        <taxon>Citrobacter</taxon>
        <taxon>Citrobacter freundii complex</taxon>
    </lineage>
</organism>